<proteinExistence type="inferred from homology"/>
<evidence type="ECO:0000255" key="1">
    <source>
        <dbReference type="HAMAP-Rule" id="MF_00368"/>
    </source>
</evidence>
<evidence type="ECO:0000256" key="2">
    <source>
        <dbReference type="SAM" id="MobiDB-lite"/>
    </source>
</evidence>
<evidence type="ECO:0000305" key="3"/>
<sequence>MSAATDEILEKLKSLTLLEAAELVKQIEETFGVSAAAPVGGMMVAAPVAGAAAAPAEEVEEKTAFDVILEEVPADKKIAVLKVVRSLTGLGLKEAKEVVESTPKPVKEGASKEDAEAAKKELEEAGAKVSIK</sequence>
<comment type="function">
    <text evidence="1">Forms part of the ribosomal stalk which helps the ribosome interact with GTP-bound translation factors. Is thus essential for accurate translation.</text>
</comment>
<comment type="subunit">
    <text evidence="1">Homodimer. Part of the ribosomal stalk of the 50S ribosomal subunit. Forms a multimeric L10(L12)X complex, where L10 forms an elongated spine to which 2 to 4 L12 dimers bind in a sequential fashion. Binds GTP-bound translation factors.</text>
</comment>
<comment type="similarity">
    <text evidence="1">Belongs to the bacterial ribosomal protein bL12 family.</text>
</comment>
<reference key="1">
    <citation type="journal article" date="2002" name="DNA Res.">
        <title>Complete genome structure of the thermophilic cyanobacterium Thermosynechococcus elongatus BP-1.</title>
        <authorList>
            <person name="Nakamura Y."/>
            <person name="Kaneko T."/>
            <person name="Sato S."/>
            <person name="Ikeuchi M."/>
            <person name="Katoh H."/>
            <person name="Sasamoto S."/>
            <person name="Watanabe A."/>
            <person name="Iriguchi M."/>
            <person name="Kawashima K."/>
            <person name="Kimura T."/>
            <person name="Kishida Y."/>
            <person name="Kiyokawa C."/>
            <person name="Kohara M."/>
            <person name="Matsumoto M."/>
            <person name="Matsuno A."/>
            <person name="Nakazaki N."/>
            <person name="Shimpo S."/>
            <person name="Sugimoto M."/>
            <person name="Takeuchi C."/>
            <person name="Yamada M."/>
            <person name="Tabata S."/>
        </authorList>
    </citation>
    <scope>NUCLEOTIDE SEQUENCE [LARGE SCALE GENOMIC DNA]</scope>
    <source>
        <strain>NIES-2133 / IAM M-273 / BP-1</strain>
    </source>
</reference>
<gene>
    <name evidence="1" type="primary">rplL</name>
    <name evidence="1" type="synonym">rpl12</name>
    <name type="ordered locus">tlr0298</name>
</gene>
<organism>
    <name type="scientific">Thermosynechococcus vestitus (strain NIES-2133 / IAM M-273 / BP-1)</name>
    <dbReference type="NCBI Taxonomy" id="197221"/>
    <lineage>
        <taxon>Bacteria</taxon>
        <taxon>Bacillati</taxon>
        <taxon>Cyanobacteriota</taxon>
        <taxon>Cyanophyceae</taxon>
        <taxon>Acaryochloridales</taxon>
        <taxon>Thermosynechococcaceae</taxon>
        <taxon>Thermosynechococcus</taxon>
    </lineage>
</organism>
<accession>Q8DM25</accession>
<dbReference type="EMBL" id="BA000039">
    <property type="protein sequence ID" value="BAC07851.1"/>
    <property type="molecule type" value="Genomic_DNA"/>
</dbReference>
<dbReference type="RefSeq" id="NP_681089.1">
    <property type="nucleotide sequence ID" value="NC_004113.1"/>
</dbReference>
<dbReference type="RefSeq" id="WP_011056153.1">
    <property type="nucleotide sequence ID" value="NC_004113.1"/>
</dbReference>
<dbReference type="SMR" id="Q8DM25"/>
<dbReference type="STRING" id="197221.gene:10746881"/>
<dbReference type="EnsemblBacteria" id="BAC07851">
    <property type="protein sequence ID" value="BAC07851"/>
    <property type="gene ID" value="BAC07851"/>
</dbReference>
<dbReference type="KEGG" id="tel:tlr0298"/>
<dbReference type="PATRIC" id="fig|197221.4.peg.312"/>
<dbReference type="eggNOG" id="COG0222">
    <property type="taxonomic scope" value="Bacteria"/>
</dbReference>
<dbReference type="Proteomes" id="UP000000440">
    <property type="component" value="Chromosome"/>
</dbReference>
<dbReference type="GO" id="GO:0022625">
    <property type="term" value="C:cytosolic large ribosomal subunit"/>
    <property type="evidence" value="ECO:0007669"/>
    <property type="project" value="TreeGrafter"/>
</dbReference>
<dbReference type="GO" id="GO:0003729">
    <property type="term" value="F:mRNA binding"/>
    <property type="evidence" value="ECO:0007669"/>
    <property type="project" value="TreeGrafter"/>
</dbReference>
<dbReference type="GO" id="GO:0003735">
    <property type="term" value="F:structural constituent of ribosome"/>
    <property type="evidence" value="ECO:0007669"/>
    <property type="project" value="InterPro"/>
</dbReference>
<dbReference type="GO" id="GO:0006412">
    <property type="term" value="P:translation"/>
    <property type="evidence" value="ECO:0007669"/>
    <property type="project" value="UniProtKB-UniRule"/>
</dbReference>
<dbReference type="CDD" id="cd00387">
    <property type="entry name" value="Ribosomal_L7_L12"/>
    <property type="match status" value="1"/>
</dbReference>
<dbReference type="FunFam" id="3.30.1390.10:FF:000001">
    <property type="entry name" value="50S ribosomal protein L7/L12"/>
    <property type="match status" value="1"/>
</dbReference>
<dbReference type="Gene3D" id="3.30.1390.10">
    <property type="match status" value="1"/>
</dbReference>
<dbReference type="Gene3D" id="1.20.5.710">
    <property type="entry name" value="Single helix bin"/>
    <property type="match status" value="1"/>
</dbReference>
<dbReference type="HAMAP" id="MF_00368">
    <property type="entry name" value="Ribosomal_bL12"/>
    <property type="match status" value="1"/>
</dbReference>
<dbReference type="InterPro" id="IPR000206">
    <property type="entry name" value="Ribosomal_bL12"/>
</dbReference>
<dbReference type="InterPro" id="IPR013823">
    <property type="entry name" value="Ribosomal_bL12_C"/>
</dbReference>
<dbReference type="InterPro" id="IPR014719">
    <property type="entry name" value="Ribosomal_bL12_C/ClpS-like"/>
</dbReference>
<dbReference type="InterPro" id="IPR008932">
    <property type="entry name" value="Ribosomal_bL12_oligo"/>
</dbReference>
<dbReference type="InterPro" id="IPR036235">
    <property type="entry name" value="Ribosomal_bL12_oligo_N_sf"/>
</dbReference>
<dbReference type="NCBIfam" id="TIGR00855">
    <property type="entry name" value="L12"/>
    <property type="match status" value="1"/>
</dbReference>
<dbReference type="PANTHER" id="PTHR45987">
    <property type="entry name" value="39S RIBOSOMAL PROTEIN L12"/>
    <property type="match status" value="1"/>
</dbReference>
<dbReference type="PANTHER" id="PTHR45987:SF4">
    <property type="entry name" value="LARGE RIBOSOMAL SUBUNIT PROTEIN BL12M"/>
    <property type="match status" value="1"/>
</dbReference>
<dbReference type="Pfam" id="PF00542">
    <property type="entry name" value="Ribosomal_L12"/>
    <property type="match status" value="1"/>
</dbReference>
<dbReference type="Pfam" id="PF16320">
    <property type="entry name" value="Ribosomal_L12_N"/>
    <property type="match status" value="1"/>
</dbReference>
<dbReference type="SUPFAM" id="SSF54736">
    <property type="entry name" value="ClpS-like"/>
    <property type="match status" value="1"/>
</dbReference>
<dbReference type="SUPFAM" id="SSF48300">
    <property type="entry name" value="Ribosomal protein L7/12, oligomerisation (N-terminal) domain"/>
    <property type="match status" value="1"/>
</dbReference>
<name>RL7_THEVB</name>
<protein>
    <recommendedName>
        <fullName evidence="1">Large ribosomal subunit protein bL12</fullName>
    </recommendedName>
    <alternativeName>
        <fullName evidence="3">50S ribosomal protein L7/L12</fullName>
    </alternativeName>
</protein>
<feature type="chain" id="PRO_0000243508" description="Large ribosomal subunit protein bL12">
    <location>
        <begin position="1"/>
        <end position="132"/>
    </location>
</feature>
<feature type="region of interest" description="Disordered" evidence="2">
    <location>
        <begin position="100"/>
        <end position="132"/>
    </location>
</feature>
<feature type="compositionally biased region" description="Basic and acidic residues" evidence="2">
    <location>
        <begin position="100"/>
        <end position="126"/>
    </location>
</feature>
<keyword id="KW-1185">Reference proteome</keyword>
<keyword id="KW-0687">Ribonucleoprotein</keyword>
<keyword id="KW-0689">Ribosomal protein</keyword>